<feature type="chain" id="PRO_0000284141" description="Muscleblind-like protein 3">
    <location>
        <begin position="1"/>
        <end position="323"/>
    </location>
</feature>
<feature type="zinc finger region" description="C3H1-type 1" evidence="2">
    <location>
        <begin position="13"/>
        <end position="41"/>
    </location>
</feature>
<feature type="zinc finger region" description="C3H1-type 2" evidence="2">
    <location>
        <begin position="47"/>
        <end position="73"/>
    </location>
</feature>
<feature type="zinc finger region" description="C3H1-type 3" evidence="2">
    <location>
        <begin position="177"/>
        <end position="205"/>
    </location>
</feature>
<feature type="zinc finger region" description="C3H1-type 4" evidence="2">
    <location>
        <begin position="213"/>
        <end position="239"/>
    </location>
</feature>
<keyword id="KW-0963">Cytoplasm</keyword>
<keyword id="KW-0217">Developmental protein</keyword>
<keyword id="KW-0479">Metal-binding</keyword>
<keyword id="KW-0507">mRNA processing</keyword>
<keyword id="KW-0508">mRNA splicing</keyword>
<keyword id="KW-0539">Nucleus</keyword>
<keyword id="KW-1185">Reference proteome</keyword>
<keyword id="KW-0677">Repeat</keyword>
<keyword id="KW-0862">Zinc</keyword>
<keyword id="KW-0863">Zinc-finger</keyword>
<dbReference type="EMBL" id="AY566277">
    <property type="protein sequence ID" value="AAT73198.1"/>
    <property type="molecule type" value="mRNA"/>
</dbReference>
<dbReference type="RefSeq" id="NP_001033092.1">
    <property type="nucleotide sequence ID" value="NM_001038003.1"/>
</dbReference>
<dbReference type="SMR" id="Q56V19"/>
<dbReference type="STRING" id="31033.ENSTRUP00000068589"/>
<dbReference type="GeneID" id="654324"/>
<dbReference type="KEGG" id="tru:654324"/>
<dbReference type="CTD" id="55796"/>
<dbReference type="eggNOG" id="KOG2494">
    <property type="taxonomic scope" value="Eukaryota"/>
</dbReference>
<dbReference type="InParanoid" id="Q56V19"/>
<dbReference type="OrthoDB" id="6285980at2759"/>
<dbReference type="Proteomes" id="UP000005226">
    <property type="component" value="Unplaced"/>
</dbReference>
<dbReference type="GO" id="GO:0005737">
    <property type="term" value="C:cytoplasm"/>
    <property type="evidence" value="ECO:0007669"/>
    <property type="project" value="UniProtKB-SubCell"/>
</dbReference>
<dbReference type="GO" id="GO:0005654">
    <property type="term" value="C:nucleoplasm"/>
    <property type="evidence" value="ECO:0007669"/>
    <property type="project" value="TreeGrafter"/>
</dbReference>
<dbReference type="GO" id="GO:0003723">
    <property type="term" value="F:RNA binding"/>
    <property type="evidence" value="ECO:0007669"/>
    <property type="project" value="TreeGrafter"/>
</dbReference>
<dbReference type="GO" id="GO:0008270">
    <property type="term" value="F:zinc ion binding"/>
    <property type="evidence" value="ECO:0007669"/>
    <property type="project" value="UniProtKB-KW"/>
</dbReference>
<dbReference type="GO" id="GO:0006397">
    <property type="term" value="P:mRNA processing"/>
    <property type="evidence" value="ECO:0007669"/>
    <property type="project" value="UniProtKB-KW"/>
</dbReference>
<dbReference type="GO" id="GO:0043484">
    <property type="term" value="P:regulation of RNA splicing"/>
    <property type="evidence" value="ECO:0007669"/>
    <property type="project" value="TreeGrafter"/>
</dbReference>
<dbReference type="GO" id="GO:0008380">
    <property type="term" value="P:RNA splicing"/>
    <property type="evidence" value="ECO:0007669"/>
    <property type="project" value="UniProtKB-KW"/>
</dbReference>
<dbReference type="FunFam" id="3.30.1370.210:FF:000004">
    <property type="entry name" value="Muscleblind like splicing regulator 1"/>
    <property type="match status" value="1"/>
</dbReference>
<dbReference type="FunFam" id="3.30.1370.210:FF:000002">
    <property type="entry name" value="Muscleblind-like 1 isoform 2"/>
    <property type="match status" value="1"/>
</dbReference>
<dbReference type="Gene3D" id="3.30.1370.210">
    <property type="match status" value="2"/>
</dbReference>
<dbReference type="InterPro" id="IPR041367">
    <property type="entry name" value="Znf-CCCH_4"/>
</dbReference>
<dbReference type="InterPro" id="IPR054429">
    <property type="entry name" value="Znf-CCCH_Muscleblind-like"/>
</dbReference>
<dbReference type="InterPro" id="IPR000571">
    <property type="entry name" value="Znf_CCCH"/>
</dbReference>
<dbReference type="PANTHER" id="PTHR12675">
    <property type="entry name" value="MUSCLEBLIND-LIKE PROTEIN"/>
    <property type="match status" value="1"/>
</dbReference>
<dbReference type="PANTHER" id="PTHR12675:SF3">
    <property type="entry name" value="MUSCLEBLIND-LIKE PROTEIN 3"/>
    <property type="match status" value="1"/>
</dbReference>
<dbReference type="Pfam" id="PF00642">
    <property type="entry name" value="zf-CCCH"/>
    <property type="match status" value="1"/>
</dbReference>
<dbReference type="Pfam" id="PF22628">
    <property type="entry name" value="zf-CCCH_10"/>
    <property type="match status" value="2"/>
</dbReference>
<dbReference type="Pfam" id="PF18044">
    <property type="entry name" value="zf-CCCH_4"/>
    <property type="match status" value="1"/>
</dbReference>
<dbReference type="SMART" id="SM00356">
    <property type="entry name" value="ZnF_C3H1"/>
    <property type="match status" value="4"/>
</dbReference>
<dbReference type="PROSITE" id="PS50103">
    <property type="entry name" value="ZF_C3H1"/>
    <property type="match status" value="4"/>
</dbReference>
<evidence type="ECO:0000250" key="1"/>
<evidence type="ECO:0000255" key="2">
    <source>
        <dbReference type="PROSITE-ProRule" id="PRU00723"/>
    </source>
</evidence>
<evidence type="ECO:0000269" key="3">
    <source>
    </source>
</evidence>
<evidence type="ECO:0000305" key="4"/>
<proteinExistence type="evidence at transcript level"/>
<gene>
    <name type="primary">mbnl3</name>
</gene>
<protein>
    <recommendedName>
        <fullName>Muscleblind-like protein 3</fullName>
    </recommendedName>
    <alternativeName>
        <fullName>Tmbnl3</fullName>
    </alternativeName>
</protein>
<organism>
    <name type="scientific">Takifugu rubripes</name>
    <name type="common">Japanese pufferfish</name>
    <name type="synonym">Fugu rubripes</name>
    <dbReference type="NCBI Taxonomy" id="31033"/>
    <lineage>
        <taxon>Eukaryota</taxon>
        <taxon>Metazoa</taxon>
        <taxon>Chordata</taxon>
        <taxon>Craniata</taxon>
        <taxon>Vertebrata</taxon>
        <taxon>Euteleostomi</taxon>
        <taxon>Actinopterygii</taxon>
        <taxon>Neopterygii</taxon>
        <taxon>Teleostei</taxon>
        <taxon>Neoteleostei</taxon>
        <taxon>Acanthomorphata</taxon>
        <taxon>Eupercaria</taxon>
        <taxon>Tetraodontiformes</taxon>
        <taxon>Tetradontoidea</taxon>
        <taxon>Tetraodontidae</taxon>
        <taxon>Takifugu</taxon>
    </lineage>
</organism>
<accession>Q56V19</accession>
<comment type="function">
    <text evidence="1">Involved in pre-mRNA alternative splicing regulation. Could inhibit terminal muscle differentiation, acting at approximately the time of myogenin induction (By similarity).</text>
</comment>
<comment type="subcellular location">
    <subcellularLocation>
        <location evidence="1">Nucleus</location>
    </subcellularLocation>
    <subcellularLocation>
        <location evidence="1">Cytoplasm</location>
    </subcellularLocation>
</comment>
<comment type="tissue specificity">
    <text evidence="3">Expressed in fast and slow myotomal muscle, heart, liver, skin, brain and testis.</text>
</comment>
<comment type="similarity">
    <text evidence="4">Belongs to the muscleblind family.</text>
</comment>
<reference key="1">
    <citation type="journal article" date="2007" name="Comp. Biochem. Physiol.">
        <title>Characterization of two paralogous muscleblind-like genes from the tiger pufferfish (Takifugu rubripes).</title>
        <authorList>
            <person name="Fernandes J.M.O."/>
            <person name="Kinghorn J.R."/>
            <person name="Johnston I.A."/>
        </authorList>
    </citation>
    <scope>NUCLEOTIDE SEQUENCE [MRNA]</scope>
    <scope>TISSUE SPECIFICITY</scope>
    <source>
        <tissue>Myotomal muscle</tissue>
    </source>
</reference>
<sequence>MAVNMTMGRDTKWLTLEVCREFQRGTCSRSDAECKFAHPSRSCHVENGRVIACFDSLKGRCTRENCKYLHPPPHLKTQLEINGRNNLIQQKAAAAMLAQQMQFMLPGAQLQPITTFPMTHSLATSPSMAFSPYLNHMGPGMGLMPELLPSTPLLVPGSPTGLAAMSNGTSSPKHMRTDKLEVCREFQRGNCTRGESDCRYAHPLEAGMVDSSENSVIVCMDYIKGRCSRDKCKYFHPPAHLQARIKASQHQASQNTASAALSPPAGTMQLLPKRPVLEKSNGAVAGIFNPSMFHYQQALANMQLQQPAFIPTGEWCSGVVTLC</sequence>
<name>MBNL3_TAKRU</name>